<reference key="1">
    <citation type="journal article" date="2008" name="J. Bacteriol.">
        <title>Genome sequence of Thermofilum pendens reveals an exceptional loss of biosynthetic pathways without genome reduction.</title>
        <authorList>
            <person name="Anderson I."/>
            <person name="Rodriguez J."/>
            <person name="Susanti D."/>
            <person name="Porat I."/>
            <person name="Reich C."/>
            <person name="Ulrich L.E."/>
            <person name="Elkins J.G."/>
            <person name="Mavromatis K."/>
            <person name="Lykidis A."/>
            <person name="Kim E."/>
            <person name="Thompson L.S."/>
            <person name="Nolan M."/>
            <person name="Land M."/>
            <person name="Copeland A."/>
            <person name="Lapidus A."/>
            <person name="Lucas S."/>
            <person name="Detter C."/>
            <person name="Zhulin I.B."/>
            <person name="Olsen G.J."/>
            <person name="Whitman W."/>
            <person name="Mukhopadhyay B."/>
            <person name="Bristow J."/>
            <person name="Kyrpides N."/>
        </authorList>
    </citation>
    <scope>NUCLEOTIDE SEQUENCE [LARGE SCALE GENOMIC DNA]</scope>
    <source>
        <strain>DSM 2475 / Hrk 5</strain>
    </source>
</reference>
<comment type="function">
    <text evidence="1">Located at the top of the head of the 30S subunit, it contacts several helices of the 16S rRNA. In the 70S ribosome it contacts the 23S rRNA (bridge B1a) and protein L5 of the 50S subunit (bridge B1b), connecting the 2 subunits; these bridges are implicated in subunit movement.</text>
</comment>
<comment type="subunit">
    <text evidence="1">Part of the 30S ribosomal subunit. Forms a loose heterodimer with protein S19. Forms two bridges to the 50S subunit in the 70S ribosome.</text>
</comment>
<comment type="similarity">
    <text evidence="1">Belongs to the universal ribosomal protein uS13 family.</text>
</comment>
<feature type="chain" id="PRO_0000306767" description="Small ribosomal subunit protein uS13">
    <location>
        <begin position="1"/>
        <end position="157"/>
    </location>
</feature>
<accession>A1RWT9</accession>
<sequence length="157" mass="17399">MSGEFRYIVRVAGVDLPGDKALVYALADIKGIGVSTAQAVAKKLGLDPYRLLGTLSEEEVEKLSAALREIEKLGLPPWMLNRRKDPFLGVDRHLITSDLLITVRNDIEFMKKIKSYKGVRHMLGLKVRGQRTRTTGRTGLTVGVKRGKEKAQQQKGG</sequence>
<name>RS13_THEPD</name>
<protein>
    <recommendedName>
        <fullName evidence="1">Small ribosomal subunit protein uS13</fullName>
    </recommendedName>
    <alternativeName>
        <fullName evidence="2">30S ribosomal protein S13</fullName>
    </alternativeName>
</protein>
<proteinExistence type="inferred from homology"/>
<organism>
    <name type="scientific">Thermofilum pendens (strain DSM 2475 / Hrk 5)</name>
    <dbReference type="NCBI Taxonomy" id="368408"/>
    <lineage>
        <taxon>Archaea</taxon>
        <taxon>Thermoproteota</taxon>
        <taxon>Thermoprotei</taxon>
        <taxon>Thermofilales</taxon>
        <taxon>Thermofilaceae</taxon>
        <taxon>Thermofilum</taxon>
    </lineage>
</organism>
<dbReference type="EMBL" id="CP000505">
    <property type="protein sequence ID" value="ABL77669.1"/>
    <property type="molecule type" value="Genomic_DNA"/>
</dbReference>
<dbReference type="RefSeq" id="WP_011751934.1">
    <property type="nucleotide sequence ID" value="NC_008698.1"/>
</dbReference>
<dbReference type="SMR" id="A1RWT9"/>
<dbReference type="STRING" id="368408.Tpen_0259"/>
<dbReference type="EnsemblBacteria" id="ABL77669">
    <property type="protein sequence ID" value="ABL77669"/>
    <property type="gene ID" value="Tpen_0259"/>
</dbReference>
<dbReference type="GeneID" id="4601676"/>
<dbReference type="KEGG" id="tpe:Tpen_0259"/>
<dbReference type="eggNOG" id="arCOG01722">
    <property type="taxonomic scope" value="Archaea"/>
</dbReference>
<dbReference type="HOGENOM" id="CLU_103849_0_0_2"/>
<dbReference type="OrthoDB" id="372127at2157"/>
<dbReference type="Proteomes" id="UP000000641">
    <property type="component" value="Chromosome"/>
</dbReference>
<dbReference type="GO" id="GO:0005829">
    <property type="term" value="C:cytosol"/>
    <property type="evidence" value="ECO:0007669"/>
    <property type="project" value="TreeGrafter"/>
</dbReference>
<dbReference type="GO" id="GO:0015935">
    <property type="term" value="C:small ribosomal subunit"/>
    <property type="evidence" value="ECO:0007669"/>
    <property type="project" value="TreeGrafter"/>
</dbReference>
<dbReference type="GO" id="GO:0019843">
    <property type="term" value="F:rRNA binding"/>
    <property type="evidence" value="ECO:0007669"/>
    <property type="project" value="UniProtKB-UniRule"/>
</dbReference>
<dbReference type="GO" id="GO:0003735">
    <property type="term" value="F:structural constituent of ribosome"/>
    <property type="evidence" value="ECO:0007669"/>
    <property type="project" value="InterPro"/>
</dbReference>
<dbReference type="GO" id="GO:0006412">
    <property type="term" value="P:translation"/>
    <property type="evidence" value="ECO:0007669"/>
    <property type="project" value="UniProtKB-UniRule"/>
</dbReference>
<dbReference type="FunFam" id="1.10.8.50:FF:000001">
    <property type="entry name" value="30S ribosomal protein S13"/>
    <property type="match status" value="1"/>
</dbReference>
<dbReference type="FunFam" id="4.10.910.10:FF:000002">
    <property type="entry name" value="40S ribosomal protein S18"/>
    <property type="match status" value="1"/>
</dbReference>
<dbReference type="Gene3D" id="1.10.8.50">
    <property type="match status" value="1"/>
</dbReference>
<dbReference type="Gene3D" id="4.10.910.10">
    <property type="entry name" value="30s ribosomal protein s13, domain 2"/>
    <property type="match status" value="1"/>
</dbReference>
<dbReference type="HAMAP" id="MF_01315">
    <property type="entry name" value="Ribosomal_uS13"/>
    <property type="match status" value="1"/>
</dbReference>
<dbReference type="InterPro" id="IPR027437">
    <property type="entry name" value="Rbsml_uS13_C"/>
</dbReference>
<dbReference type="InterPro" id="IPR001892">
    <property type="entry name" value="Ribosomal_uS13"/>
</dbReference>
<dbReference type="InterPro" id="IPR010979">
    <property type="entry name" value="Ribosomal_uS13-like_H2TH"/>
</dbReference>
<dbReference type="InterPro" id="IPR019977">
    <property type="entry name" value="Ribosomal_uS13_archaeal"/>
</dbReference>
<dbReference type="InterPro" id="IPR018269">
    <property type="entry name" value="Ribosomal_uS13_CS"/>
</dbReference>
<dbReference type="NCBIfam" id="NF003140">
    <property type="entry name" value="PRK04053.1"/>
    <property type="match status" value="1"/>
</dbReference>
<dbReference type="NCBIfam" id="TIGR03629">
    <property type="entry name" value="uS13_arch"/>
    <property type="match status" value="1"/>
</dbReference>
<dbReference type="PANTHER" id="PTHR10871">
    <property type="entry name" value="30S RIBOSOMAL PROTEIN S13/40S RIBOSOMAL PROTEIN S18"/>
    <property type="match status" value="1"/>
</dbReference>
<dbReference type="PANTHER" id="PTHR10871:SF3">
    <property type="entry name" value="SMALL RIBOSOMAL SUBUNIT PROTEIN US13"/>
    <property type="match status" value="1"/>
</dbReference>
<dbReference type="Pfam" id="PF00416">
    <property type="entry name" value="Ribosomal_S13"/>
    <property type="match status" value="1"/>
</dbReference>
<dbReference type="PIRSF" id="PIRSF002134">
    <property type="entry name" value="Ribosomal_S13"/>
    <property type="match status" value="1"/>
</dbReference>
<dbReference type="SUPFAM" id="SSF46946">
    <property type="entry name" value="S13-like H2TH domain"/>
    <property type="match status" value="1"/>
</dbReference>
<dbReference type="PROSITE" id="PS00646">
    <property type="entry name" value="RIBOSOMAL_S13_1"/>
    <property type="match status" value="1"/>
</dbReference>
<dbReference type="PROSITE" id="PS50159">
    <property type="entry name" value="RIBOSOMAL_S13_2"/>
    <property type="match status" value="1"/>
</dbReference>
<evidence type="ECO:0000255" key="1">
    <source>
        <dbReference type="HAMAP-Rule" id="MF_01315"/>
    </source>
</evidence>
<evidence type="ECO:0000305" key="2"/>
<keyword id="KW-1185">Reference proteome</keyword>
<keyword id="KW-0687">Ribonucleoprotein</keyword>
<keyword id="KW-0689">Ribosomal protein</keyword>
<keyword id="KW-0694">RNA-binding</keyword>
<keyword id="KW-0699">rRNA-binding</keyword>
<gene>
    <name evidence="1" type="primary">rps13</name>
    <name type="ordered locus">Tpen_0259</name>
</gene>